<feature type="chain" id="PRO_0000049740" description="Uncharacterized protein YqaI">
    <location>
        <begin position="1"/>
        <end position="64"/>
    </location>
</feature>
<feature type="strand" evidence="1">
    <location>
        <begin position="35"/>
        <end position="38"/>
    </location>
</feature>
<feature type="strand" evidence="1">
    <location>
        <begin position="41"/>
        <end position="44"/>
    </location>
</feature>
<feature type="helix" evidence="1">
    <location>
        <begin position="45"/>
        <end position="54"/>
    </location>
</feature>
<dbReference type="EMBL" id="D32216">
    <property type="protein sequence ID" value="BAA06923.1"/>
    <property type="molecule type" value="Genomic_DNA"/>
</dbReference>
<dbReference type="EMBL" id="D84432">
    <property type="protein sequence ID" value="BAA12384.1"/>
    <property type="molecule type" value="Genomic_DNA"/>
</dbReference>
<dbReference type="EMBL" id="AL009126">
    <property type="protein sequence ID" value="CAB14571.1"/>
    <property type="molecule type" value="Genomic_DNA"/>
</dbReference>
<dbReference type="PIR" id="H69944">
    <property type="entry name" value="H69944"/>
</dbReference>
<dbReference type="RefSeq" id="NP_390507.1">
    <property type="nucleotide sequence ID" value="NC_000964.3"/>
</dbReference>
<dbReference type="RefSeq" id="WP_003229905.1">
    <property type="nucleotide sequence ID" value="NZ_OZ025638.1"/>
</dbReference>
<dbReference type="PDB" id="2DSM">
    <property type="method" value="NMR"/>
    <property type="chains" value="A/B=1-64"/>
</dbReference>
<dbReference type="PDBsum" id="2DSM"/>
<dbReference type="BMRB" id="P45906"/>
<dbReference type="SMR" id="P45906"/>
<dbReference type="FunCoup" id="P45906">
    <property type="interactions" value="180"/>
</dbReference>
<dbReference type="STRING" id="224308.BSU26300"/>
<dbReference type="PaxDb" id="224308-BSU26300"/>
<dbReference type="EnsemblBacteria" id="CAB14571">
    <property type="protein sequence ID" value="CAB14571"/>
    <property type="gene ID" value="BSU_26300"/>
</dbReference>
<dbReference type="GeneID" id="937680"/>
<dbReference type="KEGG" id="bsu:BSU26300"/>
<dbReference type="PATRIC" id="fig|224308.179.peg.2858"/>
<dbReference type="InParanoid" id="P45906"/>
<dbReference type="OrthoDB" id="2454838at2"/>
<dbReference type="BioCyc" id="BSUB:BSU26300-MONOMER"/>
<dbReference type="EvolutionaryTrace" id="P45906"/>
<dbReference type="Proteomes" id="UP000001570">
    <property type="component" value="Chromosome"/>
</dbReference>
<dbReference type="Gene3D" id="3.30.40.30">
    <property type="entry name" value="YqaI domain"/>
    <property type="match status" value="1"/>
</dbReference>
<dbReference type="InterPro" id="IPR018474">
    <property type="entry name" value="Uncharacterised_Yqai"/>
</dbReference>
<dbReference type="InterPro" id="IPR023118">
    <property type="entry name" value="YqaI_dom_sf"/>
</dbReference>
<dbReference type="Pfam" id="PF09466">
    <property type="entry name" value="Yqai"/>
    <property type="match status" value="1"/>
</dbReference>
<dbReference type="SUPFAM" id="SSF160713">
    <property type="entry name" value="YqaI-like"/>
    <property type="match status" value="1"/>
</dbReference>
<name>YQAI_BACSU</name>
<gene>
    <name type="primary">yqaI</name>
    <name type="ordered locus">BSU26300</name>
</gene>
<protein>
    <recommendedName>
        <fullName>Uncharacterized protein YqaI</fullName>
    </recommendedName>
</protein>
<sequence>MVENPMVINNWHDKLTETDVQIDFYGDEVTPVDDYVIDGGEIILRENLERYLREQLGFEFKNAQ</sequence>
<keyword id="KW-0002">3D-structure</keyword>
<keyword id="KW-1185">Reference proteome</keyword>
<proteinExistence type="evidence at protein level"/>
<organism>
    <name type="scientific">Bacillus subtilis (strain 168)</name>
    <dbReference type="NCBI Taxonomy" id="224308"/>
    <lineage>
        <taxon>Bacteria</taxon>
        <taxon>Bacillati</taxon>
        <taxon>Bacillota</taxon>
        <taxon>Bacilli</taxon>
        <taxon>Bacillales</taxon>
        <taxon>Bacillaceae</taxon>
        <taxon>Bacillus</taxon>
    </lineage>
</organism>
<accession>P45906</accession>
<evidence type="ECO:0007829" key="1">
    <source>
        <dbReference type="PDB" id="2DSM"/>
    </source>
</evidence>
<reference key="1">
    <citation type="journal article" date="1995" name="Microbiology">
        <title>Complete nucleotide sequence of a skin element excised by DNA rearrangement during sporulation in Bacillus subtilis.</title>
        <authorList>
            <person name="Takemaru K."/>
            <person name="Mizuno M."/>
            <person name="Sato T."/>
            <person name="Takeuchi M."/>
            <person name="Kobayashi Y."/>
        </authorList>
    </citation>
    <scope>NUCLEOTIDE SEQUENCE [GENOMIC DNA]</scope>
    <source>
        <strain>168 / JH642</strain>
    </source>
</reference>
<reference key="2">
    <citation type="journal article" date="1996" name="Microbiology">
        <title>Systematic sequencing of the 283 kb 210 degrees-232 degrees region of the Bacillus subtilis genome containing the skin element and many sporulation genes.</title>
        <authorList>
            <person name="Mizuno M."/>
            <person name="Masuda S."/>
            <person name="Takemaru K."/>
            <person name="Hosono S."/>
            <person name="Sato T."/>
            <person name="Takeuchi M."/>
            <person name="Kobayashi Y."/>
        </authorList>
    </citation>
    <scope>NUCLEOTIDE SEQUENCE [GENOMIC DNA]</scope>
    <source>
        <strain>168 / JH642</strain>
    </source>
</reference>
<reference key="3">
    <citation type="journal article" date="1997" name="Nature">
        <title>The complete genome sequence of the Gram-positive bacterium Bacillus subtilis.</title>
        <authorList>
            <person name="Kunst F."/>
            <person name="Ogasawara N."/>
            <person name="Moszer I."/>
            <person name="Albertini A.M."/>
            <person name="Alloni G."/>
            <person name="Azevedo V."/>
            <person name="Bertero M.G."/>
            <person name="Bessieres P."/>
            <person name="Bolotin A."/>
            <person name="Borchert S."/>
            <person name="Borriss R."/>
            <person name="Boursier L."/>
            <person name="Brans A."/>
            <person name="Braun M."/>
            <person name="Brignell S.C."/>
            <person name="Bron S."/>
            <person name="Brouillet S."/>
            <person name="Bruschi C.V."/>
            <person name="Caldwell B."/>
            <person name="Capuano V."/>
            <person name="Carter N.M."/>
            <person name="Choi S.-K."/>
            <person name="Codani J.-J."/>
            <person name="Connerton I.F."/>
            <person name="Cummings N.J."/>
            <person name="Daniel R.A."/>
            <person name="Denizot F."/>
            <person name="Devine K.M."/>
            <person name="Duesterhoeft A."/>
            <person name="Ehrlich S.D."/>
            <person name="Emmerson P.T."/>
            <person name="Entian K.-D."/>
            <person name="Errington J."/>
            <person name="Fabret C."/>
            <person name="Ferrari E."/>
            <person name="Foulger D."/>
            <person name="Fritz C."/>
            <person name="Fujita M."/>
            <person name="Fujita Y."/>
            <person name="Fuma S."/>
            <person name="Galizzi A."/>
            <person name="Galleron N."/>
            <person name="Ghim S.-Y."/>
            <person name="Glaser P."/>
            <person name="Goffeau A."/>
            <person name="Golightly E.J."/>
            <person name="Grandi G."/>
            <person name="Guiseppi G."/>
            <person name="Guy B.J."/>
            <person name="Haga K."/>
            <person name="Haiech J."/>
            <person name="Harwood C.R."/>
            <person name="Henaut A."/>
            <person name="Hilbert H."/>
            <person name="Holsappel S."/>
            <person name="Hosono S."/>
            <person name="Hullo M.-F."/>
            <person name="Itaya M."/>
            <person name="Jones L.-M."/>
            <person name="Joris B."/>
            <person name="Karamata D."/>
            <person name="Kasahara Y."/>
            <person name="Klaerr-Blanchard M."/>
            <person name="Klein C."/>
            <person name="Kobayashi Y."/>
            <person name="Koetter P."/>
            <person name="Koningstein G."/>
            <person name="Krogh S."/>
            <person name="Kumano M."/>
            <person name="Kurita K."/>
            <person name="Lapidus A."/>
            <person name="Lardinois S."/>
            <person name="Lauber J."/>
            <person name="Lazarevic V."/>
            <person name="Lee S.-M."/>
            <person name="Levine A."/>
            <person name="Liu H."/>
            <person name="Masuda S."/>
            <person name="Mauel C."/>
            <person name="Medigue C."/>
            <person name="Medina N."/>
            <person name="Mellado R.P."/>
            <person name="Mizuno M."/>
            <person name="Moestl D."/>
            <person name="Nakai S."/>
            <person name="Noback M."/>
            <person name="Noone D."/>
            <person name="O'Reilly M."/>
            <person name="Ogawa K."/>
            <person name="Ogiwara A."/>
            <person name="Oudega B."/>
            <person name="Park S.-H."/>
            <person name="Parro V."/>
            <person name="Pohl T.M."/>
            <person name="Portetelle D."/>
            <person name="Porwollik S."/>
            <person name="Prescott A.M."/>
            <person name="Presecan E."/>
            <person name="Pujic P."/>
            <person name="Purnelle B."/>
            <person name="Rapoport G."/>
            <person name="Rey M."/>
            <person name="Reynolds S."/>
            <person name="Rieger M."/>
            <person name="Rivolta C."/>
            <person name="Rocha E."/>
            <person name="Roche B."/>
            <person name="Rose M."/>
            <person name="Sadaie Y."/>
            <person name="Sato T."/>
            <person name="Scanlan E."/>
            <person name="Schleich S."/>
            <person name="Schroeter R."/>
            <person name="Scoffone F."/>
            <person name="Sekiguchi J."/>
            <person name="Sekowska A."/>
            <person name="Seror S.J."/>
            <person name="Serror P."/>
            <person name="Shin B.-S."/>
            <person name="Soldo B."/>
            <person name="Sorokin A."/>
            <person name="Tacconi E."/>
            <person name="Takagi T."/>
            <person name="Takahashi H."/>
            <person name="Takemaru K."/>
            <person name="Takeuchi M."/>
            <person name="Tamakoshi A."/>
            <person name="Tanaka T."/>
            <person name="Terpstra P."/>
            <person name="Tognoni A."/>
            <person name="Tosato V."/>
            <person name="Uchiyama S."/>
            <person name="Vandenbol M."/>
            <person name="Vannier F."/>
            <person name="Vassarotti A."/>
            <person name="Viari A."/>
            <person name="Wambutt R."/>
            <person name="Wedler E."/>
            <person name="Wedler H."/>
            <person name="Weitzenegger T."/>
            <person name="Winters P."/>
            <person name="Wipat A."/>
            <person name="Yamamoto H."/>
            <person name="Yamane K."/>
            <person name="Yasumoto K."/>
            <person name="Yata K."/>
            <person name="Yoshida K."/>
            <person name="Yoshikawa H.-F."/>
            <person name="Zumstein E."/>
            <person name="Yoshikawa H."/>
            <person name="Danchin A."/>
        </authorList>
    </citation>
    <scope>NUCLEOTIDE SEQUENCE [LARGE SCALE GENOMIC DNA]</scope>
    <source>
        <strain>168</strain>
    </source>
</reference>
<reference key="4">
    <citation type="journal article" date="1995" name="Gene">
        <title>Analysis of a Bacillus subtilis genome fragment using a co-operative computer system prototype.</title>
        <authorList>
            <person name="Medigue C."/>
            <person name="Moszer I."/>
            <person name="Viari A."/>
            <person name="Danchin A."/>
        </authorList>
    </citation>
    <scope>IDENTIFICATION</scope>
</reference>
<reference key="5">
    <citation type="submission" date="2006-08" db="PDB data bank">
        <title>NMR structure of Bacillus subtilis protein yqaI, northeast structural genomics target SR450.</title>
        <authorList>
            <consortium name="Northeast structural genomics consortium (NESG)"/>
        </authorList>
    </citation>
    <scope>STRUCTURE BY NMR</scope>
</reference>